<gene>
    <name evidence="1" type="primary">psbX</name>
</gene>
<protein>
    <recommendedName>
        <fullName evidence="1">Photosystem II reaction center protein X</fullName>
    </recommendedName>
</protein>
<geneLocation type="cyanelle"/>
<dbReference type="EMBL" id="U30821">
    <property type="protein sequence ID" value="AAA81283.1"/>
    <property type="molecule type" value="Genomic_DNA"/>
</dbReference>
<dbReference type="PIR" id="T06940">
    <property type="entry name" value="T06940"/>
</dbReference>
<dbReference type="RefSeq" id="NP_043252.1">
    <property type="nucleotide sequence ID" value="NC_001675.1"/>
</dbReference>
<dbReference type="SMR" id="P48266"/>
<dbReference type="GeneID" id="801603"/>
<dbReference type="GO" id="GO:0033115">
    <property type="term" value="C:cyanelle thylakoid membrane"/>
    <property type="evidence" value="ECO:0007669"/>
    <property type="project" value="UniProtKB-SubCell"/>
</dbReference>
<dbReference type="GO" id="GO:0009523">
    <property type="term" value="C:photosystem II"/>
    <property type="evidence" value="ECO:0007669"/>
    <property type="project" value="UniProtKB-KW"/>
</dbReference>
<dbReference type="GO" id="GO:0015979">
    <property type="term" value="P:photosynthesis"/>
    <property type="evidence" value="ECO:0007669"/>
    <property type="project" value="UniProtKB-UniRule"/>
</dbReference>
<dbReference type="Gene3D" id="1.20.5.510">
    <property type="entry name" value="Single helix bin"/>
    <property type="match status" value="1"/>
</dbReference>
<dbReference type="HAMAP" id="MF_01386">
    <property type="entry name" value="PSII_PsbX_1"/>
    <property type="match status" value="1"/>
</dbReference>
<dbReference type="InterPro" id="IPR009518">
    <property type="entry name" value="PSII_PsbX"/>
</dbReference>
<dbReference type="InterPro" id="IPR023431">
    <property type="entry name" value="PSII_PsbX_type_1_subfam"/>
</dbReference>
<dbReference type="Pfam" id="PF06596">
    <property type="entry name" value="PsbX"/>
    <property type="match status" value="1"/>
</dbReference>
<sequence>MTSSLSAFINSLLWGAIVVVIPLSAALLFISQKDKIQRN</sequence>
<proteinExistence type="inferred from homology"/>
<evidence type="ECO:0000255" key="1">
    <source>
        <dbReference type="HAMAP-Rule" id="MF_01386"/>
    </source>
</evidence>
<feature type="chain" id="PRO_0000217287" description="Photosystem II reaction center protein X">
    <location>
        <begin position="1"/>
        <end position="39"/>
    </location>
</feature>
<feature type="transmembrane region" description="Helical" evidence="1">
    <location>
        <begin position="11"/>
        <end position="31"/>
    </location>
</feature>
<reference key="1">
    <citation type="journal article" date="1995" name="Plant Mol. Biol. Rep.">
        <title>Nucleotide sequence of the cyanelle DNA from Cyanophora paradoxa.</title>
        <authorList>
            <person name="Stirewalt V.L."/>
            <person name="Michalowski C.B."/>
            <person name="Loeffelhardt W."/>
            <person name="Bohnert H.J."/>
            <person name="Bryant D.A."/>
        </authorList>
    </citation>
    <scope>NUCLEOTIDE SEQUENCE [LARGE SCALE GENOMIC DNA]</scope>
    <source>
        <strain>UTEX LB 555 / Pringsheim</strain>
    </source>
</reference>
<reference key="2">
    <citation type="book" date="1997" name="Eukaryotism and symbiosis">
        <title>The complete sequence of the cyanelle genome of Cyanophora paradoxa: the genetic complexity of a primitive plastid.</title>
        <editorList>
            <person name="Schenk H.E.A."/>
            <person name="Herrmann R."/>
            <person name="Jeon K.W."/>
            <person name="Mueller N.E."/>
            <person name="Schwemmler W."/>
        </editorList>
        <authorList>
            <person name="Loeffelhardt W."/>
            <person name="Stirewalt V.L."/>
            <person name="Michalowski C.B."/>
            <person name="Annarella M."/>
            <person name="Farley J.Y."/>
            <person name="Schluchter W.M."/>
            <person name="Chung S."/>
            <person name="Newmann-Spallart C."/>
            <person name="Steiner J.M."/>
            <person name="Jakowitsch J."/>
            <person name="Bohnert H.J."/>
            <person name="Bryant D.A."/>
        </authorList>
    </citation>
    <scope>NUCLEOTIDE SEQUENCE [LARGE SCALE GENOMIC DNA]</scope>
    <source>
        <strain>UTEX LB 555 / Pringsheim</strain>
    </source>
</reference>
<keyword id="KW-0194">Cyanelle</keyword>
<keyword id="KW-0472">Membrane</keyword>
<keyword id="KW-0602">Photosynthesis</keyword>
<keyword id="KW-0604">Photosystem II</keyword>
<keyword id="KW-0934">Plastid</keyword>
<keyword id="KW-0793">Thylakoid</keyword>
<keyword id="KW-0812">Transmembrane</keyword>
<keyword id="KW-1133">Transmembrane helix</keyword>
<accession>P48266</accession>
<name>PSBX_CYAPA</name>
<comment type="function">
    <text evidence="1">Involved in the binding and/or turnover of quinones at the Q(B) site of photosystem II (PSII). PSII is a light-driven water plastoquinone oxidoreductase, using light energy to abstract electrons from H(2)O, generating a proton gradient subsequently used for ATP formation.</text>
</comment>
<comment type="subunit">
    <text evidence="1">PSII is composed of 1 copy each of membrane proteins PsbA, PsbB, PsbC, PsbD, PsbE, PsbF, PsbH, PsbI, PsbJ, PsbK, PsbL, PsbM, PsbT, PsbX, PsbY, PsbZ, Psb30/Ycf12, at least 3 peripheral proteins of the oxygen-evolving complex and a large number of cofactors. It forms dimeric complexes.</text>
</comment>
<comment type="subcellular location">
    <subcellularLocation>
        <location evidence="1">Plastid</location>
        <location evidence="1">Cyanelle thylakoid membrane</location>
        <topology evidence="1">Single-pass membrane protein</topology>
    </subcellularLocation>
</comment>
<comment type="similarity">
    <text evidence="1">Belongs to the PsbX family. Type 1 subfamily.</text>
</comment>
<organism>
    <name type="scientific">Cyanophora paradoxa</name>
    <dbReference type="NCBI Taxonomy" id="2762"/>
    <lineage>
        <taxon>Eukaryota</taxon>
        <taxon>Glaucocystophyceae</taxon>
        <taxon>Cyanophoraceae</taxon>
        <taxon>Cyanophora</taxon>
    </lineage>
</organism>